<accession>Q6DAC6</accession>
<keyword id="KW-1185">Reference proteome</keyword>
<reference key="1">
    <citation type="journal article" date="2004" name="Proc. Natl. Acad. Sci. U.S.A.">
        <title>Genome sequence of the enterobacterial phytopathogen Erwinia carotovora subsp. atroseptica and characterization of virulence factors.</title>
        <authorList>
            <person name="Bell K.S."/>
            <person name="Sebaihia M."/>
            <person name="Pritchard L."/>
            <person name="Holden M.T.G."/>
            <person name="Hyman L.J."/>
            <person name="Holeva M.C."/>
            <person name="Thomson N.R."/>
            <person name="Bentley S.D."/>
            <person name="Churcher L.J.C."/>
            <person name="Mungall K."/>
            <person name="Atkin R."/>
            <person name="Bason N."/>
            <person name="Brooks K."/>
            <person name="Chillingworth T."/>
            <person name="Clark K."/>
            <person name="Doggett J."/>
            <person name="Fraser A."/>
            <person name="Hance Z."/>
            <person name="Hauser H."/>
            <person name="Jagels K."/>
            <person name="Moule S."/>
            <person name="Norbertczak H."/>
            <person name="Ormond D."/>
            <person name="Price C."/>
            <person name="Quail M.A."/>
            <person name="Sanders M."/>
            <person name="Walker D."/>
            <person name="Whitehead S."/>
            <person name="Salmond G.P.C."/>
            <person name="Birch P.R.J."/>
            <person name="Parkhill J."/>
            <person name="Toth I.K."/>
        </authorList>
    </citation>
    <scope>NUCLEOTIDE SEQUENCE [LARGE SCALE GENOMIC DNA]</scope>
    <source>
        <strain>SCRI 1043 / ATCC BAA-672</strain>
    </source>
</reference>
<gene>
    <name type="ordered locus">ECA0329</name>
</gene>
<proteinExistence type="inferred from homology"/>
<evidence type="ECO:0000255" key="1">
    <source>
        <dbReference type="HAMAP-Rule" id="MF_01188"/>
    </source>
</evidence>
<evidence type="ECO:0000256" key="2">
    <source>
        <dbReference type="SAM" id="MobiDB-lite"/>
    </source>
</evidence>
<comment type="similarity">
    <text evidence="1">Belongs to the UPF0441 family.</text>
</comment>
<organism>
    <name type="scientific">Pectobacterium atrosepticum (strain SCRI 1043 / ATCC BAA-672)</name>
    <name type="common">Erwinia carotovora subsp. atroseptica</name>
    <dbReference type="NCBI Taxonomy" id="218491"/>
    <lineage>
        <taxon>Bacteria</taxon>
        <taxon>Pseudomonadati</taxon>
        <taxon>Pseudomonadota</taxon>
        <taxon>Gammaproteobacteria</taxon>
        <taxon>Enterobacterales</taxon>
        <taxon>Pectobacteriaceae</taxon>
        <taxon>Pectobacterium</taxon>
    </lineage>
</organism>
<sequence>MKRTKNINQETFRKEWRTHRLAPVALAVSAVFFLAGCEQTDETVSLYQNADDCSSANPSMAAQCTTAYNNALKEAEKTAPKYATKEDCVAEFGEAQCTQTPAPAQAGMAAEPQQSGGMSWMPLMAGYMMGRMMGGGAGFAQQPLFSPKTPASPANGQFVDAAGKNYGNAATGRTMTVPKTALAPKPATTSTITRGGFGETVAKQNSMQRSSASSNSSSSRSMGG</sequence>
<feature type="chain" id="PRO_0000293633" description="UPF0441 protein ECA0329">
    <location>
        <begin position="1"/>
        <end position="224"/>
    </location>
</feature>
<feature type="region of interest" description="Disordered" evidence="2">
    <location>
        <begin position="180"/>
        <end position="224"/>
    </location>
</feature>
<feature type="compositionally biased region" description="Low complexity" evidence="2">
    <location>
        <begin position="204"/>
        <end position="224"/>
    </location>
</feature>
<dbReference type="EMBL" id="BX950851">
    <property type="protein sequence ID" value="CAG73248.1"/>
    <property type="molecule type" value="Genomic_DNA"/>
</dbReference>
<dbReference type="RefSeq" id="WP_011091959.1">
    <property type="nucleotide sequence ID" value="NC_004547.2"/>
</dbReference>
<dbReference type="STRING" id="218491.ECA0329"/>
<dbReference type="KEGG" id="eca:ECA0329"/>
<dbReference type="eggNOG" id="COG5463">
    <property type="taxonomic scope" value="Bacteria"/>
</dbReference>
<dbReference type="HOGENOM" id="CLU_095624_0_0_6"/>
<dbReference type="OrthoDB" id="5903948at2"/>
<dbReference type="Proteomes" id="UP000007966">
    <property type="component" value="Chromosome"/>
</dbReference>
<dbReference type="HAMAP" id="MF_01188">
    <property type="entry name" value="UPF0441"/>
    <property type="match status" value="1"/>
</dbReference>
<dbReference type="InterPro" id="IPR009576">
    <property type="entry name" value="Biofilm_formation_YgiB"/>
</dbReference>
<dbReference type="NCBIfam" id="NF008655">
    <property type="entry name" value="PRK11653.1"/>
    <property type="match status" value="1"/>
</dbReference>
<dbReference type="Pfam" id="PF06693">
    <property type="entry name" value="DUF1190"/>
    <property type="match status" value="1"/>
</dbReference>
<name>Y329_PECAS</name>
<protein>
    <recommendedName>
        <fullName evidence="1">UPF0441 protein ECA0329</fullName>
    </recommendedName>
</protein>